<reference key="1">
    <citation type="journal article" date="2008" name="Environ. Microbiol.">
        <title>The genome of Erwinia tasmaniensis strain Et1/99, a non-pathogenic bacterium in the genus Erwinia.</title>
        <authorList>
            <person name="Kube M."/>
            <person name="Migdoll A.M."/>
            <person name="Mueller I."/>
            <person name="Kuhl H."/>
            <person name="Beck A."/>
            <person name="Reinhardt R."/>
            <person name="Geider K."/>
        </authorList>
    </citation>
    <scope>NUCLEOTIDE SEQUENCE [LARGE SCALE GENOMIC DNA]</scope>
    <source>
        <strain>DSM 17950 / CFBP 7177 / CIP 109463 / NCPPB 4357 / Et1/99</strain>
    </source>
</reference>
<proteinExistence type="inferred from homology"/>
<evidence type="ECO:0000255" key="1">
    <source>
        <dbReference type="HAMAP-Rule" id="MF_01042"/>
    </source>
</evidence>
<protein>
    <recommendedName>
        <fullName evidence="1">Ribosome rescue factor SmrB</fullName>
        <ecNumber evidence="1">3.1.-.-</ecNumber>
    </recommendedName>
</protein>
<organism>
    <name type="scientific">Erwinia tasmaniensis (strain DSM 17950 / CFBP 7177 / CIP 109463 / NCPPB 4357 / Et1/99)</name>
    <dbReference type="NCBI Taxonomy" id="465817"/>
    <lineage>
        <taxon>Bacteria</taxon>
        <taxon>Pseudomonadati</taxon>
        <taxon>Pseudomonadota</taxon>
        <taxon>Gammaproteobacteria</taxon>
        <taxon>Enterobacterales</taxon>
        <taxon>Erwiniaceae</taxon>
        <taxon>Erwinia</taxon>
    </lineage>
</organism>
<name>SMRB_ERWT9</name>
<feature type="chain" id="PRO_1000136043" description="Ribosome rescue factor SmrB">
    <location>
        <begin position="1"/>
        <end position="183"/>
    </location>
</feature>
<feature type="domain" description="Smr" evidence="1">
    <location>
        <begin position="98"/>
        <end position="173"/>
    </location>
</feature>
<comment type="function">
    <text evidence="1">Acts as a ribosome collision sensor. Detects stalled/collided disomes (pairs of ribosomes where the leading ribosome is stalled and a second ribosome has collided with it) and endonucleolytically cleaves mRNA at the 5' boundary of the stalled ribosome. Stalled/collided disomes form a new interface (primarily via the 30S subunits) that binds SmrB. Cleaved mRNA becomes available for tmRNA ligation, leading to ribosomal subunit dissociation and rescue of stalled ribosomes.</text>
</comment>
<comment type="subunit">
    <text evidence="1">Associates with collided ribosomes, but not with correctly translating polysomes.</text>
</comment>
<comment type="similarity">
    <text evidence="1">Belongs to the SmrB family.</text>
</comment>
<gene>
    <name evidence="1" type="primary">smrB</name>
    <name type="ordered locus">ETA_11520</name>
</gene>
<accession>B2VIX9</accession>
<dbReference type="EC" id="3.1.-.-" evidence="1"/>
<dbReference type="EMBL" id="CU468135">
    <property type="protein sequence ID" value="CAO96198.1"/>
    <property type="molecule type" value="Genomic_DNA"/>
</dbReference>
<dbReference type="RefSeq" id="WP_012440895.1">
    <property type="nucleotide sequence ID" value="NC_010694.1"/>
</dbReference>
<dbReference type="SMR" id="B2VIX9"/>
<dbReference type="STRING" id="465817.ETA_11520"/>
<dbReference type="KEGG" id="eta:ETA_11520"/>
<dbReference type="eggNOG" id="COG2840">
    <property type="taxonomic scope" value="Bacteria"/>
</dbReference>
<dbReference type="HOGENOM" id="CLU_055978_4_0_6"/>
<dbReference type="OrthoDB" id="5795446at2"/>
<dbReference type="Proteomes" id="UP000001726">
    <property type="component" value="Chromosome"/>
</dbReference>
<dbReference type="GO" id="GO:0004521">
    <property type="term" value="F:RNA endonuclease activity"/>
    <property type="evidence" value="ECO:0007669"/>
    <property type="project" value="UniProtKB-UniRule"/>
</dbReference>
<dbReference type="GO" id="GO:0019843">
    <property type="term" value="F:rRNA binding"/>
    <property type="evidence" value="ECO:0007669"/>
    <property type="project" value="UniProtKB-UniRule"/>
</dbReference>
<dbReference type="GO" id="GO:0072344">
    <property type="term" value="P:rescue of stalled ribosome"/>
    <property type="evidence" value="ECO:0007669"/>
    <property type="project" value="UniProtKB-UniRule"/>
</dbReference>
<dbReference type="Gene3D" id="3.30.1370.110">
    <property type="match status" value="1"/>
</dbReference>
<dbReference type="HAMAP" id="MF_01042">
    <property type="entry name" value="SmrB"/>
    <property type="match status" value="1"/>
</dbReference>
<dbReference type="InterPro" id="IPR002625">
    <property type="entry name" value="Smr_dom"/>
</dbReference>
<dbReference type="InterPro" id="IPR036063">
    <property type="entry name" value="Smr_dom_sf"/>
</dbReference>
<dbReference type="InterPro" id="IPR022990">
    <property type="entry name" value="SmrB-like"/>
</dbReference>
<dbReference type="NCBIfam" id="NF003432">
    <property type="entry name" value="PRK04946.1"/>
    <property type="match status" value="1"/>
</dbReference>
<dbReference type="PANTHER" id="PTHR35562">
    <property type="entry name" value="DNA ENDONUCLEASE SMRA-RELATED"/>
    <property type="match status" value="1"/>
</dbReference>
<dbReference type="PANTHER" id="PTHR35562:SF1">
    <property type="entry name" value="UPF0115 PROTEIN YFCN"/>
    <property type="match status" value="1"/>
</dbReference>
<dbReference type="Pfam" id="PF01713">
    <property type="entry name" value="Smr"/>
    <property type="match status" value="1"/>
</dbReference>
<dbReference type="SMART" id="SM00463">
    <property type="entry name" value="SMR"/>
    <property type="match status" value="1"/>
</dbReference>
<dbReference type="SUPFAM" id="SSF160443">
    <property type="entry name" value="SMR domain-like"/>
    <property type="match status" value="1"/>
</dbReference>
<dbReference type="PROSITE" id="PS50828">
    <property type="entry name" value="SMR"/>
    <property type="match status" value="1"/>
</dbReference>
<keyword id="KW-0255">Endonuclease</keyword>
<keyword id="KW-0378">Hydrolase</keyword>
<keyword id="KW-0540">Nuclease</keyword>
<keyword id="KW-1185">Reference proteome</keyword>
<keyword id="KW-0694">RNA-binding</keyword>
<keyword id="KW-0699">rRNA-binding</keyword>
<sequence length="183" mass="20914">MSKNEKLSAEEKALFRGLMSGTRQLSQDTIVHKPPRKKFNQVPVKRLLSEQMDASHYFSDEFQPLLASEGAVRYVRSDVSHYELKKLRRGDFTPEIFLDLHGLTQKQAKQELGALIAACRREHIFCASVMHGHGKHILKQQTPLWLAQHPWVMAFHQAPKLFGGDAALLVLIEVEEWLPPELP</sequence>